<dbReference type="EC" id="2.7.7.72" evidence="1"/>
<dbReference type="EMBL" id="CP000439">
    <property type="protein sequence ID" value="ABK90467.1"/>
    <property type="molecule type" value="Genomic_DNA"/>
</dbReference>
<dbReference type="RefSeq" id="WP_003041164.1">
    <property type="nucleotide sequence ID" value="NZ_CP009633.1"/>
</dbReference>
<dbReference type="SMR" id="A0Q8A2"/>
<dbReference type="KEGG" id="ftn:FTN_1607"/>
<dbReference type="KEGG" id="ftx:AW25_390"/>
<dbReference type="BioCyc" id="FTUL401614:G1G75-1659-MONOMER"/>
<dbReference type="Proteomes" id="UP000000762">
    <property type="component" value="Chromosome"/>
</dbReference>
<dbReference type="GO" id="GO:0005524">
    <property type="term" value="F:ATP binding"/>
    <property type="evidence" value="ECO:0007669"/>
    <property type="project" value="UniProtKB-UniRule"/>
</dbReference>
<dbReference type="GO" id="GO:0004810">
    <property type="term" value="F:CCA tRNA nucleotidyltransferase activity"/>
    <property type="evidence" value="ECO:0007669"/>
    <property type="project" value="UniProtKB-UniRule"/>
</dbReference>
<dbReference type="GO" id="GO:0000287">
    <property type="term" value="F:magnesium ion binding"/>
    <property type="evidence" value="ECO:0007669"/>
    <property type="project" value="UniProtKB-UniRule"/>
</dbReference>
<dbReference type="GO" id="GO:0000049">
    <property type="term" value="F:tRNA binding"/>
    <property type="evidence" value="ECO:0007669"/>
    <property type="project" value="UniProtKB-UniRule"/>
</dbReference>
<dbReference type="GO" id="GO:0042245">
    <property type="term" value="P:RNA repair"/>
    <property type="evidence" value="ECO:0007669"/>
    <property type="project" value="UniProtKB-KW"/>
</dbReference>
<dbReference type="GO" id="GO:0001680">
    <property type="term" value="P:tRNA 3'-terminal CCA addition"/>
    <property type="evidence" value="ECO:0007669"/>
    <property type="project" value="UniProtKB-UniRule"/>
</dbReference>
<dbReference type="CDD" id="cd05398">
    <property type="entry name" value="NT_ClassII-CCAase"/>
    <property type="match status" value="1"/>
</dbReference>
<dbReference type="Gene3D" id="3.30.460.10">
    <property type="entry name" value="Beta Polymerase, domain 2"/>
    <property type="match status" value="1"/>
</dbReference>
<dbReference type="Gene3D" id="1.10.3090.10">
    <property type="entry name" value="cca-adding enzyme, domain 2"/>
    <property type="match status" value="1"/>
</dbReference>
<dbReference type="HAMAP" id="MF_01262">
    <property type="entry name" value="CCA_bact_type2"/>
    <property type="match status" value="1"/>
</dbReference>
<dbReference type="InterPro" id="IPR012006">
    <property type="entry name" value="CCA_bact"/>
</dbReference>
<dbReference type="InterPro" id="IPR043519">
    <property type="entry name" value="NT_sf"/>
</dbReference>
<dbReference type="InterPro" id="IPR002646">
    <property type="entry name" value="PolA_pol_head_dom"/>
</dbReference>
<dbReference type="InterPro" id="IPR032828">
    <property type="entry name" value="PolyA_RNA-bd"/>
</dbReference>
<dbReference type="InterPro" id="IPR050124">
    <property type="entry name" value="tRNA_CCA-adding_enzyme"/>
</dbReference>
<dbReference type="NCBIfam" id="NF009811">
    <property type="entry name" value="PRK13296.1"/>
    <property type="match status" value="1"/>
</dbReference>
<dbReference type="PANTHER" id="PTHR47545">
    <property type="entry name" value="MULTIFUNCTIONAL CCA PROTEIN"/>
    <property type="match status" value="1"/>
</dbReference>
<dbReference type="PANTHER" id="PTHR47545:SF1">
    <property type="entry name" value="MULTIFUNCTIONAL CCA PROTEIN"/>
    <property type="match status" value="1"/>
</dbReference>
<dbReference type="Pfam" id="PF01743">
    <property type="entry name" value="PolyA_pol"/>
    <property type="match status" value="1"/>
</dbReference>
<dbReference type="Pfam" id="PF12627">
    <property type="entry name" value="PolyA_pol_RNAbd"/>
    <property type="match status" value="1"/>
</dbReference>
<dbReference type="PIRSF" id="PIRSF000813">
    <property type="entry name" value="CCA_bact"/>
    <property type="match status" value="1"/>
</dbReference>
<dbReference type="SUPFAM" id="SSF81301">
    <property type="entry name" value="Nucleotidyltransferase"/>
    <property type="match status" value="1"/>
</dbReference>
<dbReference type="SUPFAM" id="SSF81891">
    <property type="entry name" value="Poly A polymerase C-terminal region-like"/>
    <property type="match status" value="1"/>
</dbReference>
<sequence length="369" mass="42627">MKFYLVGGAVRDMLLGITPKDKDWVVVGATEDEMLANGFIKIAANFPVFIHPQTKQEYALARSEKKTANGYHGFEVNFSKYITLEDDLKRRDLTINSIAIDQNNKVIDPFNGQADLQNRILRHTSIAFIEDPLRVVRLARFKAQLSNFNFSIAEETLTLIKELIKTGELNHLTRERLHIEFVKALNNPKIFFTTLEELEALKIIFPNISCILLLIPNKSFFENPIYKDSNINEKITLCLLKVPQQKLDDIRKELLLTNKHYKLLKASIAISKILEDRNITAEEIFQLIKNANIIRDKNLFAESLNLYKKYLKVCDTITPHRNYQLLQTTINTIKNASINSLTIETIPKDKLRNTLKQLYIDIIKKQLKL</sequence>
<evidence type="ECO:0000255" key="1">
    <source>
        <dbReference type="HAMAP-Rule" id="MF_01262"/>
    </source>
</evidence>
<reference key="1">
    <citation type="journal article" date="2007" name="Genome Biol.">
        <title>Comparison of Francisella tularensis genomes reveals evolutionary events associated with the emergence of human pathogenic strains.</title>
        <authorList>
            <person name="Rohmer L."/>
            <person name="Fong C."/>
            <person name="Abmayr S."/>
            <person name="Wasnick M."/>
            <person name="Larson Freeman T.J."/>
            <person name="Radey M."/>
            <person name="Guina T."/>
            <person name="Svensson K."/>
            <person name="Hayden H.S."/>
            <person name="Jacobs M."/>
            <person name="Gallagher L.A."/>
            <person name="Manoil C."/>
            <person name="Ernst R.K."/>
            <person name="Drees B."/>
            <person name="Buckley D."/>
            <person name="Haugen E."/>
            <person name="Bovee D."/>
            <person name="Zhou Y."/>
            <person name="Chang J."/>
            <person name="Levy R."/>
            <person name="Lim R."/>
            <person name="Gillett W."/>
            <person name="Guenthener D."/>
            <person name="Kang A."/>
            <person name="Shaffer S.A."/>
            <person name="Taylor G."/>
            <person name="Chen J."/>
            <person name="Gallis B."/>
            <person name="D'Argenio D.A."/>
            <person name="Forsman M."/>
            <person name="Olson M.V."/>
            <person name="Goodlett D.R."/>
            <person name="Kaul R."/>
            <person name="Miller S.I."/>
            <person name="Brittnacher M.J."/>
        </authorList>
    </citation>
    <scope>NUCLEOTIDE SEQUENCE [LARGE SCALE GENOMIC DNA]</scope>
    <source>
        <strain>U112</strain>
    </source>
</reference>
<keyword id="KW-0067">ATP-binding</keyword>
<keyword id="KW-0460">Magnesium</keyword>
<keyword id="KW-0479">Metal-binding</keyword>
<keyword id="KW-0547">Nucleotide-binding</keyword>
<keyword id="KW-0548">Nucleotidyltransferase</keyword>
<keyword id="KW-0692">RNA repair</keyword>
<keyword id="KW-0694">RNA-binding</keyword>
<keyword id="KW-0808">Transferase</keyword>
<keyword id="KW-0819">tRNA processing</keyword>
<organism>
    <name type="scientific">Francisella tularensis subsp. novicida (strain U112)</name>
    <dbReference type="NCBI Taxonomy" id="401614"/>
    <lineage>
        <taxon>Bacteria</taxon>
        <taxon>Pseudomonadati</taxon>
        <taxon>Pseudomonadota</taxon>
        <taxon>Gammaproteobacteria</taxon>
        <taxon>Thiotrichales</taxon>
        <taxon>Francisellaceae</taxon>
        <taxon>Francisella</taxon>
    </lineage>
</organism>
<proteinExistence type="inferred from homology"/>
<gene>
    <name evidence="1" type="primary">cca</name>
    <name type="ordered locus">FTN_1607</name>
</gene>
<name>CCA_FRATN</name>
<protein>
    <recommendedName>
        <fullName evidence="1">CCA-adding enzyme</fullName>
        <ecNumber evidence="1">2.7.7.72</ecNumber>
    </recommendedName>
    <alternativeName>
        <fullName evidence="1">CCA tRNA nucleotidyltransferase</fullName>
    </alternativeName>
    <alternativeName>
        <fullName evidence="1">tRNA CCA-pyrophosphorylase</fullName>
    </alternativeName>
    <alternativeName>
        <fullName evidence="1">tRNA adenylyl-/cytidylyl- transferase</fullName>
    </alternativeName>
    <alternativeName>
        <fullName evidence="1">tRNA nucleotidyltransferase</fullName>
    </alternativeName>
    <alternativeName>
        <fullName evidence="1">tRNA-NT</fullName>
    </alternativeName>
</protein>
<accession>A0Q8A2</accession>
<feature type="chain" id="PRO_1000054317" description="CCA-adding enzyme">
    <location>
        <begin position="1"/>
        <end position="369"/>
    </location>
</feature>
<feature type="binding site" evidence="1">
    <location>
        <position position="8"/>
    </location>
    <ligand>
        <name>ATP</name>
        <dbReference type="ChEBI" id="CHEBI:30616"/>
    </ligand>
</feature>
<feature type="binding site" evidence="1">
    <location>
        <position position="8"/>
    </location>
    <ligand>
        <name>CTP</name>
        <dbReference type="ChEBI" id="CHEBI:37563"/>
    </ligand>
</feature>
<feature type="binding site" evidence="1">
    <location>
        <position position="11"/>
    </location>
    <ligand>
        <name>ATP</name>
        <dbReference type="ChEBI" id="CHEBI:30616"/>
    </ligand>
</feature>
<feature type="binding site" evidence="1">
    <location>
        <position position="11"/>
    </location>
    <ligand>
        <name>CTP</name>
        <dbReference type="ChEBI" id="CHEBI:37563"/>
    </ligand>
</feature>
<feature type="binding site" evidence="1">
    <location>
        <position position="21"/>
    </location>
    <ligand>
        <name>Mg(2+)</name>
        <dbReference type="ChEBI" id="CHEBI:18420"/>
    </ligand>
</feature>
<feature type="binding site" evidence="1">
    <location>
        <position position="23"/>
    </location>
    <ligand>
        <name>Mg(2+)</name>
        <dbReference type="ChEBI" id="CHEBI:18420"/>
    </ligand>
</feature>
<feature type="binding site" evidence="1">
    <location>
        <position position="91"/>
    </location>
    <ligand>
        <name>ATP</name>
        <dbReference type="ChEBI" id="CHEBI:30616"/>
    </ligand>
</feature>
<feature type="binding site" evidence="1">
    <location>
        <position position="91"/>
    </location>
    <ligand>
        <name>CTP</name>
        <dbReference type="ChEBI" id="CHEBI:37563"/>
    </ligand>
</feature>
<feature type="binding site" evidence="1">
    <location>
        <position position="137"/>
    </location>
    <ligand>
        <name>ATP</name>
        <dbReference type="ChEBI" id="CHEBI:30616"/>
    </ligand>
</feature>
<feature type="binding site" evidence="1">
    <location>
        <position position="137"/>
    </location>
    <ligand>
        <name>CTP</name>
        <dbReference type="ChEBI" id="CHEBI:37563"/>
    </ligand>
</feature>
<feature type="binding site" evidence="1">
    <location>
        <position position="140"/>
    </location>
    <ligand>
        <name>ATP</name>
        <dbReference type="ChEBI" id="CHEBI:30616"/>
    </ligand>
</feature>
<feature type="binding site" evidence="1">
    <location>
        <position position="140"/>
    </location>
    <ligand>
        <name>CTP</name>
        <dbReference type="ChEBI" id="CHEBI:37563"/>
    </ligand>
</feature>
<comment type="function">
    <text evidence="1">Catalyzes the addition and repair of the essential 3'-terminal CCA sequence in tRNAs without using a nucleic acid template. Adds these three nucleotides in the order of C, C, and A to the tRNA nucleotide-73, using CTP and ATP as substrates and producing inorganic pyrophosphate. tRNA 3'-terminal CCA addition is required both for tRNA processing and repair. Also involved in tRNA surveillance by mediating tandem CCA addition to generate a CCACCA at the 3' terminus of unstable tRNAs. While stable tRNAs receive only 3'-terminal CCA, unstable tRNAs are marked with CCACCA and rapidly degraded.</text>
</comment>
<comment type="catalytic activity">
    <reaction evidence="1">
        <text>a tRNA precursor + 2 CTP + ATP = a tRNA with a 3' CCA end + 3 diphosphate</text>
        <dbReference type="Rhea" id="RHEA:14433"/>
        <dbReference type="Rhea" id="RHEA-COMP:10465"/>
        <dbReference type="Rhea" id="RHEA-COMP:10468"/>
        <dbReference type="ChEBI" id="CHEBI:30616"/>
        <dbReference type="ChEBI" id="CHEBI:33019"/>
        <dbReference type="ChEBI" id="CHEBI:37563"/>
        <dbReference type="ChEBI" id="CHEBI:74896"/>
        <dbReference type="ChEBI" id="CHEBI:83071"/>
        <dbReference type="EC" id="2.7.7.72"/>
    </reaction>
</comment>
<comment type="catalytic activity">
    <reaction evidence="1">
        <text>a tRNA with a 3' CCA end + 2 CTP + ATP = a tRNA with a 3' CCACCA end + 3 diphosphate</text>
        <dbReference type="Rhea" id="RHEA:76235"/>
        <dbReference type="Rhea" id="RHEA-COMP:10468"/>
        <dbReference type="Rhea" id="RHEA-COMP:18655"/>
        <dbReference type="ChEBI" id="CHEBI:30616"/>
        <dbReference type="ChEBI" id="CHEBI:33019"/>
        <dbReference type="ChEBI" id="CHEBI:37563"/>
        <dbReference type="ChEBI" id="CHEBI:83071"/>
        <dbReference type="ChEBI" id="CHEBI:195187"/>
    </reaction>
    <physiologicalReaction direction="left-to-right" evidence="1">
        <dbReference type="Rhea" id="RHEA:76236"/>
    </physiologicalReaction>
</comment>
<comment type="cofactor">
    <cofactor evidence="1">
        <name>Mg(2+)</name>
        <dbReference type="ChEBI" id="CHEBI:18420"/>
    </cofactor>
</comment>
<comment type="miscellaneous">
    <text evidence="1">A single active site specifically recognizes both ATP and CTP and is responsible for their addition.</text>
</comment>
<comment type="similarity">
    <text evidence="1">Belongs to the tRNA nucleotidyltransferase/poly(A) polymerase family. Bacterial CCA-adding enzyme type 2 subfamily.</text>
</comment>